<organism>
    <name type="scientific">Aeromonas salmonicida (strain A449)</name>
    <dbReference type="NCBI Taxonomy" id="382245"/>
    <lineage>
        <taxon>Bacteria</taxon>
        <taxon>Pseudomonadati</taxon>
        <taxon>Pseudomonadota</taxon>
        <taxon>Gammaproteobacteria</taxon>
        <taxon>Aeromonadales</taxon>
        <taxon>Aeromonadaceae</taxon>
        <taxon>Aeromonas</taxon>
    </lineage>
</organism>
<evidence type="ECO:0000255" key="1">
    <source>
        <dbReference type="HAMAP-Rule" id="MF_00632"/>
    </source>
</evidence>
<reference key="1">
    <citation type="journal article" date="2008" name="BMC Genomics">
        <title>The genome of Aeromonas salmonicida subsp. salmonicida A449: insights into the evolution of a fish pathogen.</title>
        <authorList>
            <person name="Reith M.E."/>
            <person name="Singh R.K."/>
            <person name="Curtis B."/>
            <person name="Boyd J.M."/>
            <person name="Bouevitch A."/>
            <person name="Kimball J."/>
            <person name="Munholland J."/>
            <person name="Murphy C."/>
            <person name="Sarty D."/>
            <person name="Williams J."/>
            <person name="Nash J.H."/>
            <person name="Johnson S.C."/>
            <person name="Brown L.L."/>
        </authorList>
    </citation>
    <scope>NUCLEOTIDE SEQUENCE [LARGE SCALE GENOMIC DNA]</scope>
    <source>
        <strain>A449</strain>
    </source>
</reference>
<dbReference type="EMBL" id="CP000644">
    <property type="protein sequence ID" value="ABO91200.1"/>
    <property type="molecule type" value="Genomic_DNA"/>
</dbReference>
<dbReference type="RefSeq" id="WP_005311958.1">
    <property type="nucleotide sequence ID" value="NC_009348.1"/>
</dbReference>
<dbReference type="SMR" id="A4SQM8"/>
<dbReference type="STRING" id="29491.GCA_000820065_03587"/>
<dbReference type="KEGG" id="asa:ASA_3207"/>
<dbReference type="eggNOG" id="COG1666">
    <property type="taxonomic scope" value="Bacteria"/>
</dbReference>
<dbReference type="HOGENOM" id="CLU_099839_1_0_6"/>
<dbReference type="Proteomes" id="UP000000225">
    <property type="component" value="Chromosome"/>
</dbReference>
<dbReference type="GO" id="GO:0005829">
    <property type="term" value="C:cytosol"/>
    <property type="evidence" value="ECO:0007669"/>
    <property type="project" value="TreeGrafter"/>
</dbReference>
<dbReference type="GO" id="GO:0000166">
    <property type="term" value="F:nucleotide binding"/>
    <property type="evidence" value="ECO:0007669"/>
    <property type="project" value="TreeGrafter"/>
</dbReference>
<dbReference type="CDD" id="cd11740">
    <property type="entry name" value="YajQ_like"/>
    <property type="match status" value="1"/>
</dbReference>
<dbReference type="FunFam" id="3.30.70.860:FF:000001">
    <property type="entry name" value="UPF0234 protein YajQ"/>
    <property type="match status" value="1"/>
</dbReference>
<dbReference type="FunFam" id="3.30.70.990:FF:000001">
    <property type="entry name" value="UPF0234 protein YajQ"/>
    <property type="match status" value="1"/>
</dbReference>
<dbReference type="Gene3D" id="3.30.70.860">
    <property type="match status" value="1"/>
</dbReference>
<dbReference type="Gene3D" id="3.30.70.990">
    <property type="entry name" value="YajQ-like, domain 2"/>
    <property type="match status" value="1"/>
</dbReference>
<dbReference type="HAMAP" id="MF_00632">
    <property type="entry name" value="YajQ"/>
    <property type="match status" value="1"/>
</dbReference>
<dbReference type="InterPro" id="IPR007551">
    <property type="entry name" value="DUF520"/>
</dbReference>
<dbReference type="InterPro" id="IPR035571">
    <property type="entry name" value="UPF0234-like_C"/>
</dbReference>
<dbReference type="InterPro" id="IPR035570">
    <property type="entry name" value="UPF0234_N"/>
</dbReference>
<dbReference type="InterPro" id="IPR036183">
    <property type="entry name" value="YajQ-like_sf"/>
</dbReference>
<dbReference type="NCBIfam" id="NF003819">
    <property type="entry name" value="PRK05412.1"/>
    <property type="match status" value="1"/>
</dbReference>
<dbReference type="PANTHER" id="PTHR30476">
    <property type="entry name" value="UPF0234 PROTEIN YAJQ"/>
    <property type="match status" value="1"/>
</dbReference>
<dbReference type="PANTHER" id="PTHR30476:SF0">
    <property type="entry name" value="UPF0234 PROTEIN YAJQ"/>
    <property type="match status" value="1"/>
</dbReference>
<dbReference type="Pfam" id="PF04461">
    <property type="entry name" value="DUF520"/>
    <property type="match status" value="1"/>
</dbReference>
<dbReference type="SUPFAM" id="SSF89963">
    <property type="entry name" value="YajQ-like"/>
    <property type="match status" value="2"/>
</dbReference>
<sequence length="160" mass="18192">MPSFDIVSEVKMNEVLNAVDNANRELATRFDFRGVEASFELNKEEVKLEADADFQLKQMVEILRAALLKRNIENSSMDVGDSVHSGKRFHLNVKFKQGIEKEIAKKLVKLIKDSKIKVQVAIQGDEVRVTGKKRDDLQEAMALVRGAELGQPMQFQNFRD</sequence>
<accession>A4SQM8</accession>
<name>Y3207_AERS4</name>
<keyword id="KW-0547">Nucleotide-binding</keyword>
<gene>
    <name type="ordered locus">ASA_3207</name>
</gene>
<feature type="chain" id="PRO_1000051713" description="Nucleotide-binding protein ASA_3207">
    <location>
        <begin position="1"/>
        <end position="160"/>
    </location>
</feature>
<comment type="function">
    <text evidence="1">Nucleotide-binding protein.</text>
</comment>
<comment type="similarity">
    <text evidence="1">Belongs to the YajQ family.</text>
</comment>
<proteinExistence type="inferred from homology"/>
<protein>
    <recommendedName>
        <fullName evidence="1">Nucleotide-binding protein ASA_3207</fullName>
    </recommendedName>
</protein>